<dbReference type="EMBL" id="CP001101">
    <property type="protein sequence ID" value="ACE04114.1"/>
    <property type="molecule type" value="Genomic_DNA"/>
</dbReference>
<dbReference type="SMR" id="B3EQT3"/>
<dbReference type="STRING" id="331678.Cphamn1_1180"/>
<dbReference type="KEGG" id="cpb:Cphamn1_1180"/>
<dbReference type="eggNOG" id="COG0353">
    <property type="taxonomic scope" value="Bacteria"/>
</dbReference>
<dbReference type="HOGENOM" id="CLU_060739_1_0_10"/>
<dbReference type="OrthoDB" id="9802672at2"/>
<dbReference type="GO" id="GO:0003677">
    <property type="term" value="F:DNA binding"/>
    <property type="evidence" value="ECO:0007669"/>
    <property type="project" value="UniProtKB-UniRule"/>
</dbReference>
<dbReference type="GO" id="GO:0008270">
    <property type="term" value="F:zinc ion binding"/>
    <property type="evidence" value="ECO:0007669"/>
    <property type="project" value="UniProtKB-KW"/>
</dbReference>
<dbReference type="GO" id="GO:0006310">
    <property type="term" value="P:DNA recombination"/>
    <property type="evidence" value="ECO:0007669"/>
    <property type="project" value="UniProtKB-UniRule"/>
</dbReference>
<dbReference type="GO" id="GO:0006281">
    <property type="term" value="P:DNA repair"/>
    <property type="evidence" value="ECO:0007669"/>
    <property type="project" value="UniProtKB-UniRule"/>
</dbReference>
<dbReference type="CDD" id="cd01025">
    <property type="entry name" value="TOPRIM_recR"/>
    <property type="match status" value="1"/>
</dbReference>
<dbReference type="Gene3D" id="3.40.1360.10">
    <property type="match status" value="1"/>
</dbReference>
<dbReference type="Gene3D" id="6.10.250.240">
    <property type="match status" value="1"/>
</dbReference>
<dbReference type="Gene3D" id="1.10.8.420">
    <property type="entry name" value="RecR Domain 1"/>
    <property type="match status" value="1"/>
</dbReference>
<dbReference type="HAMAP" id="MF_00017">
    <property type="entry name" value="RecR"/>
    <property type="match status" value="1"/>
</dbReference>
<dbReference type="InterPro" id="IPR000093">
    <property type="entry name" value="DNA_Rcmb_RecR"/>
</dbReference>
<dbReference type="InterPro" id="IPR023627">
    <property type="entry name" value="Rcmb_RecR"/>
</dbReference>
<dbReference type="InterPro" id="IPR006171">
    <property type="entry name" value="TOPRIM_dom"/>
</dbReference>
<dbReference type="InterPro" id="IPR034137">
    <property type="entry name" value="TOPRIM_RecR"/>
</dbReference>
<dbReference type="NCBIfam" id="TIGR00615">
    <property type="entry name" value="recR"/>
    <property type="match status" value="1"/>
</dbReference>
<dbReference type="PANTHER" id="PTHR30446">
    <property type="entry name" value="RECOMBINATION PROTEIN RECR"/>
    <property type="match status" value="1"/>
</dbReference>
<dbReference type="PANTHER" id="PTHR30446:SF0">
    <property type="entry name" value="RECOMBINATION PROTEIN RECR"/>
    <property type="match status" value="1"/>
</dbReference>
<dbReference type="Pfam" id="PF21175">
    <property type="entry name" value="RecR_C"/>
    <property type="match status" value="1"/>
</dbReference>
<dbReference type="Pfam" id="PF21176">
    <property type="entry name" value="RecR_HhH"/>
    <property type="match status" value="1"/>
</dbReference>
<dbReference type="Pfam" id="PF13662">
    <property type="entry name" value="Toprim_4"/>
    <property type="match status" value="1"/>
</dbReference>
<dbReference type="SMART" id="SM00493">
    <property type="entry name" value="TOPRIM"/>
    <property type="match status" value="1"/>
</dbReference>
<dbReference type="SUPFAM" id="SSF111304">
    <property type="entry name" value="Recombination protein RecR"/>
    <property type="match status" value="1"/>
</dbReference>
<dbReference type="PROSITE" id="PS50880">
    <property type="entry name" value="TOPRIM"/>
    <property type="match status" value="1"/>
</dbReference>
<name>RECR_CHLPB</name>
<keyword id="KW-0227">DNA damage</keyword>
<keyword id="KW-0233">DNA recombination</keyword>
<keyword id="KW-0234">DNA repair</keyword>
<keyword id="KW-0479">Metal-binding</keyword>
<keyword id="KW-0862">Zinc</keyword>
<keyword id="KW-0863">Zinc-finger</keyword>
<accession>B3EQT3</accession>
<comment type="function">
    <text evidence="1">May play a role in DNA repair. It seems to be involved in an RecBC-independent recombinational process of DNA repair. It may act with RecF and RecO.</text>
</comment>
<comment type="similarity">
    <text evidence="1">Belongs to the RecR family.</text>
</comment>
<sequence length="204" mass="22317">MRYTSTAIEALIEEFAKLPGIGRKTAQRLSMHILQEKPGEVEKLSRALTDVKEKVISCSICQNVTDRGDDPCSICRGKGRDLSKICVVESPPDVLAFEKTAQYRGLYHVLHGVISPLDGVGPDDIKVKELLARLSLQDGREVSEVIMALSPTVEGETTVLYVSRLLKPLGIEVTKIARGIPVGAELEYIDEATLSRAMEGRSVL</sequence>
<reference key="1">
    <citation type="submission" date="2008-06" db="EMBL/GenBank/DDBJ databases">
        <title>Complete sequence of Chlorobium phaeobacteroides BS1.</title>
        <authorList>
            <consortium name="US DOE Joint Genome Institute"/>
            <person name="Lucas S."/>
            <person name="Copeland A."/>
            <person name="Lapidus A."/>
            <person name="Glavina del Rio T."/>
            <person name="Dalin E."/>
            <person name="Tice H."/>
            <person name="Bruce D."/>
            <person name="Goodwin L."/>
            <person name="Pitluck S."/>
            <person name="Schmutz J."/>
            <person name="Larimer F."/>
            <person name="Land M."/>
            <person name="Hauser L."/>
            <person name="Kyrpides N."/>
            <person name="Ovchinnikova G."/>
            <person name="Li T."/>
            <person name="Liu Z."/>
            <person name="Zhao F."/>
            <person name="Overmann J."/>
            <person name="Bryant D.A."/>
            <person name="Richardson P."/>
        </authorList>
    </citation>
    <scope>NUCLEOTIDE SEQUENCE [LARGE SCALE GENOMIC DNA]</scope>
    <source>
        <strain>BS1</strain>
    </source>
</reference>
<protein>
    <recommendedName>
        <fullName evidence="1">Recombination protein RecR</fullName>
    </recommendedName>
</protein>
<proteinExistence type="inferred from homology"/>
<organism>
    <name type="scientific">Chlorobium phaeobacteroides (strain BS1)</name>
    <dbReference type="NCBI Taxonomy" id="331678"/>
    <lineage>
        <taxon>Bacteria</taxon>
        <taxon>Pseudomonadati</taxon>
        <taxon>Chlorobiota</taxon>
        <taxon>Chlorobiia</taxon>
        <taxon>Chlorobiales</taxon>
        <taxon>Chlorobiaceae</taxon>
        <taxon>Chlorobium/Pelodictyon group</taxon>
        <taxon>Chlorobium</taxon>
    </lineage>
</organism>
<feature type="chain" id="PRO_1000089716" description="Recombination protein RecR">
    <location>
        <begin position="1"/>
        <end position="204"/>
    </location>
</feature>
<feature type="domain" description="Toprim" evidence="1">
    <location>
        <begin position="83"/>
        <end position="181"/>
    </location>
</feature>
<feature type="zinc finger region" description="C4-type" evidence="1">
    <location>
        <begin position="58"/>
        <end position="75"/>
    </location>
</feature>
<evidence type="ECO:0000255" key="1">
    <source>
        <dbReference type="HAMAP-Rule" id="MF_00017"/>
    </source>
</evidence>
<gene>
    <name evidence="1" type="primary">recR</name>
    <name type="ordered locus">Cphamn1_1180</name>
</gene>